<accession>Q0P4A7</accession>
<dbReference type="EMBL" id="BC122195">
    <property type="protein sequence ID" value="AAI22196.1"/>
    <property type="molecule type" value="mRNA"/>
</dbReference>
<dbReference type="RefSeq" id="NP_001038902.1">
    <property type="nucleotide sequence ID" value="NM_001045437.1"/>
</dbReference>
<dbReference type="RefSeq" id="XP_021336979.1">
    <property type="nucleotide sequence ID" value="XM_021481304.2"/>
</dbReference>
<dbReference type="SMR" id="Q0P4A7"/>
<dbReference type="FunCoup" id="Q0P4A7">
    <property type="interactions" value="1337"/>
</dbReference>
<dbReference type="STRING" id="7955.ENSDARP00000087173"/>
<dbReference type="PaxDb" id="7955-ENSDARP00000106830"/>
<dbReference type="Ensembl" id="ENSDART00000092741">
    <property type="protein sequence ID" value="ENSDARP00000087173"/>
    <property type="gene ID" value="ENSDARG00000063445"/>
</dbReference>
<dbReference type="GeneID" id="751727"/>
<dbReference type="KEGG" id="dre:751727"/>
<dbReference type="AGR" id="ZFIN:ZDB-GENE-060825-140"/>
<dbReference type="CTD" id="116841"/>
<dbReference type="ZFIN" id="ZDB-GENE-060825-140">
    <property type="gene designation" value="snap47"/>
</dbReference>
<dbReference type="eggNOG" id="KOG3065">
    <property type="taxonomic scope" value="Eukaryota"/>
</dbReference>
<dbReference type="HOGENOM" id="CLU_029855_0_0_1"/>
<dbReference type="InParanoid" id="Q0P4A7"/>
<dbReference type="OMA" id="DICIHTW"/>
<dbReference type="OrthoDB" id="10009801at2759"/>
<dbReference type="PhylomeDB" id="Q0P4A7"/>
<dbReference type="TreeFam" id="TF331066"/>
<dbReference type="PRO" id="PR:Q0P4A7"/>
<dbReference type="Proteomes" id="UP000000437">
    <property type="component" value="Chromosome 2"/>
</dbReference>
<dbReference type="Bgee" id="ENSDARG00000063445">
    <property type="expression patterns" value="Expressed in brain and 22 other cell types or tissues"/>
</dbReference>
<dbReference type="ExpressionAtlas" id="Q0P4A7">
    <property type="expression patterns" value="baseline"/>
</dbReference>
<dbReference type="GO" id="GO:0005886">
    <property type="term" value="C:plasma membrane"/>
    <property type="evidence" value="ECO:0000318"/>
    <property type="project" value="GO_Central"/>
</dbReference>
<dbReference type="GO" id="GO:0098793">
    <property type="term" value="C:presynapse"/>
    <property type="evidence" value="ECO:0007669"/>
    <property type="project" value="GOC"/>
</dbReference>
<dbReference type="GO" id="GO:0031201">
    <property type="term" value="C:SNARE complex"/>
    <property type="evidence" value="ECO:0000318"/>
    <property type="project" value="GO_Central"/>
</dbReference>
<dbReference type="GO" id="GO:0005484">
    <property type="term" value="F:SNAP receptor activity"/>
    <property type="evidence" value="ECO:0000318"/>
    <property type="project" value="GO_Central"/>
</dbReference>
<dbReference type="GO" id="GO:0019905">
    <property type="term" value="F:syntaxin binding"/>
    <property type="evidence" value="ECO:0000318"/>
    <property type="project" value="GO_Central"/>
</dbReference>
<dbReference type="GO" id="GO:0006887">
    <property type="term" value="P:exocytosis"/>
    <property type="evidence" value="ECO:0000318"/>
    <property type="project" value="GO_Central"/>
</dbReference>
<dbReference type="GO" id="GO:0031629">
    <property type="term" value="P:synaptic vesicle fusion to presynaptic active zone membrane"/>
    <property type="evidence" value="ECO:0000318"/>
    <property type="project" value="GO_Central"/>
</dbReference>
<dbReference type="GO" id="GO:0016082">
    <property type="term" value="P:synaptic vesicle priming"/>
    <property type="evidence" value="ECO:0000318"/>
    <property type="project" value="GO_Central"/>
</dbReference>
<dbReference type="CDD" id="cd15854">
    <property type="entry name" value="SNARE_SNAP47C"/>
    <property type="match status" value="1"/>
</dbReference>
<dbReference type="CDD" id="cd15888">
    <property type="entry name" value="SNARE_SNAP47N"/>
    <property type="match status" value="1"/>
</dbReference>
<dbReference type="FunFam" id="1.20.5.110:FF:000080">
    <property type="entry name" value="Synaptosomal-associated protein 47"/>
    <property type="match status" value="1"/>
</dbReference>
<dbReference type="FunFam" id="1.20.5.110:FF:000117">
    <property type="entry name" value="Synaptosomal-associated protein 47"/>
    <property type="match status" value="1"/>
</dbReference>
<dbReference type="FunFam" id="2.30.29.30:FF:000269">
    <property type="entry name" value="Synaptosomal-associated protein 47"/>
    <property type="match status" value="1"/>
</dbReference>
<dbReference type="Gene3D" id="1.20.5.110">
    <property type="match status" value="2"/>
</dbReference>
<dbReference type="Gene3D" id="2.30.29.30">
    <property type="entry name" value="Pleckstrin-homology domain (PH domain)/Phosphotyrosine-binding domain (PTB)"/>
    <property type="match status" value="1"/>
</dbReference>
<dbReference type="InterPro" id="IPR011993">
    <property type="entry name" value="PH-like_dom_sf"/>
</dbReference>
<dbReference type="InterPro" id="IPR000727">
    <property type="entry name" value="T_SNARE_dom"/>
</dbReference>
<dbReference type="PANTHER" id="PTHR19305">
    <property type="entry name" value="SYNAPTOSOMAL ASSOCIATED PROTEIN"/>
    <property type="match status" value="1"/>
</dbReference>
<dbReference type="PANTHER" id="PTHR19305:SF1">
    <property type="entry name" value="SYNAPTOSOMAL-ASSOCIATED PROTEIN 47"/>
    <property type="match status" value="1"/>
</dbReference>
<dbReference type="SUPFAM" id="SSF58038">
    <property type="entry name" value="SNARE fusion complex"/>
    <property type="match status" value="2"/>
</dbReference>
<dbReference type="PROSITE" id="PS50192">
    <property type="entry name" value="T_SNARE"/>
    <property type="match status" value="2"/>
</dbReference>
<feature type="chain" id="PRO_0000307154" description="Synaptosomal-associated protein 47">
    <location>
        <begin position="1"/>
        <end position="419"/>
    </location>
</feature>
<feature type="domain" description="t-SNARE coiled-coil homology 1" evidence="2">
    <location>
        <begin position="108"/>
        <end position="170"/>
    </location>
</feature>
<feature type="domain" description="t-SNARE coiled-coil homology 2" evidence="2">
    <location>
        <begin position="356"/>
        <end position="418"/>
    </location>
</feature>
<proteinExistence type="evidence at transcript level"/>
<organism>
    <name type="scientific">Danio rerio</name>
    <name type="common">Zebrafish</name>
    <name type="synonym">Brachydanio rerio</name>
    <dbReference type="NCBI Taxonomy" id="7955"/>
    <lineage>
        <taxon>Eukaryota</taxon>
        <taxon>Metazoa</taxon>
        <taxon>Chordata</taxon>
        <taxon>Craniata</taxon>
        <taxon>Vertebrata</taxon>
        <taxon>Euteleostomi</taxon>
        <taxon>Actinopterygii</taxon>
        <taxon>Neopterygii</taxon>
        <taxon>Teleostei</taxon>
        <taxon>Ostariophysi</taxon>
        <taxon>Cypriniformes</taxon>
        <taxon>Danionidae</taxon>
        <taxon>Danioninae</taxon>
        <taxon>Danio</taxon>
    </lineage>
</organism>
<keyword id="KW-0175">Coiled coil</keyword>
<keyword id="KW-1185">Reference proteome</keyword>
<keyword id="KW-0677">Repeat</keyword>
<reference key="1">
    <citation type="submission" date="2006-08" db="EMBL/GenBank/DDBJ databases">
        <authorList>
            <consortium name="NIH - Zebrafish Gene Collection (ZGC) project"/>
        </authorList>
    </citation>
    <scope>NUCLEOTIDE SEQUENCE [LARGE SCALE MRNA]</scope>
    <source>
        <tissue>Embryo</tissue>
    </source>
</reference>
<gene>
    <name type="primary">snap47</name>
    <name type="ORF">zgc:153222</name>
</gene>
<evidence type="ECO:0000250" key="1"/>
<evidence type="ECO:0000255" key="2">
    <source>
        <dbReference type="PROSITE-ProRule" id="PRU00202"/>
    </source>
</evidence>
<evidence type="ECO:0000305" key="3"/>
<sequence>MSQEPSIHTWPGSYYINSEKRWASGVLSLSRTTLRFASEQKQESLMSLKLSRIMEIKMESSSIIFSALTVLEQGNLKHWFGSLRPCRNAVYHVLEHFWRERLLSPSEPQGAEAPLSKGQELISLISGAQRRLEDTGKVLNHQGEQFDNMIQGLDKIESDLTVADKLLSELECPSWWPFSKMPWRSHQEAKSEAAAKAACTKGSGKIQKVIVSIPAIVFRDGNTGNMKPGSLTLLVSSLEVREANGQLLHCFEKEEVDDIHVFNPYEISIRQRFIGKPDICFRLLSARMTEALSVLEMQYKKKVEVTRDYAVFRSTSATTPESPESGGNVWAAGHGQDTEVPVEVPAGELTQLQLQVLQPTVTEAEAQELKQMLQQLKNLALEAETELERQDEALDVLSCSTDHATMNINRHTRRMRKLL</sequence>
<name>SNP47_DANRE</name>
<protein>
    <recommendedName>
        <fullName>Synaptosomal-associated protein 47</fullName>
        <shortName>SNAP-47</shortName>
    </recommendedName>
    <alternativeName>
        <fullName>Synaptosomal-associated 47 kDa protein</fullName>
    </alternativeName>
</protein>
<comment type="function">
    <text evidence="1">May play a role in intracellular membrane fusion.</text>
</comment>
<comment type="similarity">
    <text evidence="3">Belongs to the SVAP1 family.</text>
</comment>